<protein>
    <recommendedName>
        <fullName evidence="1">Ribosome maturation factor RimM</fullName>
    </recommendedName>
</protein>
<feature type="chain" id="PRO_1000196570" description="Ribosome maturation factor RimM">
    <location>
        <begin position="1"/>
        <end position="176"/>
    </location>
</feature>
<feature type="domain" description="PRC barrel" evidence="1">
    <location>
        <begin position="96"/>
        <end position="176"/>
    </location>
</feature>
<reference key="1">
    <citation type="journal article" date="2008" name="PLoS ONE">
        <title>Environmental adaptation: genomic analysis of the piezotolerant and psychrotolerant deep-sea iron reducing bacterium Shewanella piezotolerans WP3.</title>
        <authorList>
            <person name="Wang F."/>
            <person name="Wang J."/>
            <person name="Jian H."/>
            <person name="Zhang B."/>
            <person name="Li S."/>
            <person name="Wang F."/>
            <person name="Zeng X."/>
            <person name="Gao L."/>
            <person name="Bartlett D.H."/>
            <person name="Yu J."/>
            <person name="Hu S."/>
            <person name="Xiao X."/>
        </authorList>
    </citation>
    <scope>NUCLEOTIDE SEQUENCE [LARGE SCALE GENOMIC DNA]</scope>
    <source>
        <strain>WP3 / JCM 13877</strain>
    </source>
</reference>
<comment type="function">
    <text evidence="1">An accessory protein needed during the final step in the assembly of 30S ribosomal subunit, possibly for assembly of the head region. Essential for efficient processing of 16S rRNA. May be needed both before and after RbfA during the maturation of 16S rRNA. It has affinity for free ribosomal 30S subunits but not for 70S ribosomes.</text>
</comment>
<comment type="subunit">
    <text evidence="1">Binds ribosomal protein uS19.</text>
</comment>
<comment type="subcellular location">
    <subcellularLocation>
        <location evidence="1">Cytoplasm</location>
    </subcellularLocation>
</comment>
<comment type="domain">
    <text evidence="1">The PRC barrel domain binds ribosomal protein uS19.</text>
</comment>
<comment type="similarity">
    <text evidence="1">Belongs to the RimM family.</text>
</comment>
<keyword id="KW-0143">Chaperone</keyword>
<keyword id="KW-0963">Cytoplasm</keyword>
<keyword id="KW-0690">Ribosome biogenesis</keyword>
<keyword id="KW-0698">rRNA processing</keyword>
<evidence type="ECO:0000255" key="1">
    <source>
        <dbReference type="HAMAP-Rule" id="MF_00014"/>
    </source>
</evidence>
<proteinExistence type="inferred from homology"/>
<organism>
    <name type="scientific">Shewanella piezotolerans (strain WP3 / JCM 13877)</name>
    <dbReference type="NCBI Taxonomy" id="225849"/>
    <lineage>
        <taxon>Bacteria</taxon>
        <taxon>Pseudomonadati</taxon>
        <taxon>Pseudomonadota</taxon>
        <taxon>Gammaproteobacteria</taxon>
        <taxon>Alteromonadales</taxon>
        <taxon>Shewanellaceae</taxon>
        <taxon>Shewanella</taxon>
    </lineage>
</organism>
<gene>
    <name evidence="1" type="primary">rimM</name>
    <name type="ordered locus">swp_3767</name>
</gene>
<sequence length="176" mass="19918">MSSKQEPVVLGKLGSSHGIKGWLKITTYTDSVEGIFDYSPWLLKEQGEWREVKVLQWRMQGKAVVACLEGVETRDQAQALTNCEIAVTPEQMEVLPEDEFYWRDLIGCEVVNTKGYNMGKVQEIVETGSNDVLLVKANAKDGFGKAERMIPFVTEQFIQKVDLTAKQILVDWDPDF</sequence>
<name>RIMM_SHEPW</name>
<dbReference type="EMBL" id="CP000472">
    <property type="protein sequence ID" value="ACJ30449.1"/>
    <property type="molecule type" value="Genomic_DNA"/>
</dbReference>
<dbReference type="RefSeq" id="WP_020913793.1">
    <property type="nucleotide sequence ID" value="NC_011566.1"/>
</dbReference>
<dbReference type="SMR" id="B8CQI3"/>
<dbReference type="STRING" id="225849.swp_3767"/>
<dbReference type="KEGG" id="swp:swp_3767"/>
<dbReference type="eggNOG" id="COG0806">
    <property type="taxonomic scope" value="Bacteria"/>
</dbReference>
<dbReference type="HOGENOM" id="CLU_077636_1_0_6"/>
<dbReference type="OrthoDB" id="9783509at2"/>
<dbReference type="Proteomes" id="UP000000753">
    <property type="component" value="Chromosome"/>
</dbReference>
<dbReference type="GO" id="GO:0005737">
    <property type="term" value="C:cytoplasm"/>
    <property type="evidence" value="ECO:0007669"/>
    <property type="project" value="UniProtKB-SubCell"/>
</dbReference>
<dbReference type="GO" id="GO:0005840">
    <property type="term" value="C:ribosome"/>
    <property type="evidence" value="ECO:0007669"/>
    <property type="project" value="InterPro"/>
</dbReference>
<dbReference type="GO" id="GO:0043022">
    <property type="term" value="F:ribosome binding"/>
    <property type="evidence" value="ECO:0007669"/>
    <property type="project" value="InterPro"/>
</dbReference>
<dbReference type="GO" id="GO:0042274">
    <property type="term" value="P:ribosomal small subunit biogenesis"/>
    <property type="evidence" value="ECO:0007669"/>
    <property type="project" value="UniProtKB-UniRule"/>
</dbReference>
<dbReference type="GO" id="GO:0006364">
    <property type="term" value="P:rRNA processing"/>
    <property type="evidence" value="ECO:0007669"/>
    <property type="project" value="UniProtKB-UniRule"/>
</dbReference>
<dbReference type="Gene3D" id="2.30.30.240">
    <property type="entry name" value="PRC-barrel domain"/>
    <property type="match status" value="1"/>
</dbReference>
<dbReference type="Gene3D" id="2.40.30.60">
    <property type="entry name" value="RimM"/>
    <property type="match status" value="1"/>
</dbReference>
<dbReference type="HAMAP" id="MF_00014">
    <property type="entry name" value="Ribosome_mat_RimM"/>
    <property type="match status" value="1"/>
</dbReference>
<dbReference type="InterPro" id="IPR011033">
    <property type="entry name" value="PRC_barrel-like_sf"/>
</dbReference>
<dbReference type="InterPro" id="IPR056792">
    <property type="entry name" value="PRC_RimM"/>
</dbReference>
<dbReference type="InterPro" id="IPR011961">
    <property type="entry name" value="RimM"/>
</dbReference>
<dbReference type="InterPro" id="IPR002676">
    <property type="entry name" value="RimM_N"/>
</dbReference>
<dbReference type="InterPro" id="IPR036976">
    <property type="entry name" value="RimM_N_sf"/>
</dbReference>
<dbReference type="InterPro" id="IPR009000">
    <property type="entry name" value="Transl_B-barrel_sf"/>
</dbReference>
<dbReference type="NCBIfam" id="TIGR02273">
    <property type="entry name" value="16S_RimM"/>
    <property type="match status" value="1"/>
</dbReference>
<dbReference type="PANTHER" id="PTHR33692">
    <property type="entry name" value="RIBOSOME MATURATION FACTOR RIMM"/>
    <property type="match status" value="1"/>
</dbReference>
<dbReference type="PANTHER" id="PTHR33692:SF1">
    <property type="entry name" value="RIBOSOME MATURATION FACTOR RIMM"/>
    <property type="match status" value="1"/>
</dbReference>
<dbReference type="Pfam" id="PF24986">
    <property type="entry name" value="PRC_RimM"/>
    <property type="match status" value="1"/>
</dbReference>
<dbReference type="Pfam" id="PF01782">
    <property type="entry name" value="RimM"/>
    <property type="match status" value="1"/>
</dbReference>
<dbReference type="SUPFAM" id="SSF50346">
    <property type="entry name" value="PRC-barrel domain"/>
    <property type="match status" value="1"/>
</dbReference>
<dbReference type="SUPFAM" id="SSF50447">
    <property type="entry name" value="Translation proteins"/>
    <property type="match status" value="1"/>
</dbReference>
<accession>B8CQI3</accession>